<reference key="1">
    <citation type="journal article" date="2003" name="Biochem. J.">
        <title>Identification and functional analysis of enzymes required for precorrin-2 dehydrogenation and metal ion insertion in the biosynthesis of sirohaem and cobalamin in Bacillus megaterium.</title>
        <authorList>
            <person name="Raux E."/>
            <person name="Leech H.K."/>
            <person name="Beck R."/>
            <person name="Schubert H.L."/>
            <person name="Santander P.J."/>
            <person name="Roessner C.A."/>
            <person name="Scott A.I."/>
            <person name="Martens J.H."/>
            <person name="Jahn D."/>
            <person name="Thermes C."/>
            <person name="Rambach A."/>
            <person name="Warren M.J."/>
        </authorList>
    </citation>
    <scope>NUCLEOTIDE SEQUENCE [GENOMIC DNA]</scope>
    <source>
        <strain>DSM 509 / CCM 1464 / NBRC 12109</strain>
    </source>
</reference>
<gene>
    <name type="primary">sirB</name>
</gene>
<name>SIRB_PRIMG</name>
<comment type="function">
    <text>Chelates iron to the siroheme precursor.</text>
</comment>
<comment type="catalytic activity">
    <reaction>
        <text>siroheme + 2 H(+) = sirohydrochlorin + Fe(2+)</text>
        <dbReference type="Rhea" id="RHEA:24360"/>
        <dbReference type="ChEBI" id="CHEBI:15378"/>
        <dbReference type="ChEBI" id="CHEBI:29033"/>
        <dbReference type="ChEBI" id="CHEBI:58351"/>
        <dbReference type="ChEBI" id="CHEBI:60052"/>
        <dbReference type="EC" id="4.99.1.4"/>
    </reaction>
</comment>
<comment type="pathway">
    <text>Porphyrin-containing compound metabolism; siroheme biosynthesis; siroheme from sirohydrochlorin: step 1/1.</text>
</comment>
<comment type="similarity">
    <text evidence="2">Belongs to the CbiX family. SirB subfamily.</text>
</comment>
<protein>
    <recommendedName>
        <fullName>Sirohydrochlorin ferrochelatase</fullName>
        <ecNumber>4.99.1.4</ecNumber>
    </recommendedName>
</protein>
<feature type="chain" id="PRO_0000150365" description="Sirohydrochlorin ferrochelatase">
    <location>
        <begin position="1"/>
        <end position="266"/>
    </location>
</feature>
<feature type="binding site" evidence="1">
    <location>
        <position position="20"/>
    </location>
    <ligand>
        <name>Fe cation</name>
        <dbReference type="ChEBI" id="CHEBI:24875"/>
    </ligand>
</feature>
<feature type="binding site" evidence="1">
    <location>
        <position position="86"/>
    </location>
    <ligand>
        <name>Fe cation</name>
        <dbReference type="ChEBI" id="CHEBI:24875"/>
    </ligand>
</feature>
<keyword id="KW-0408">Iron</keyword>
<keyword id="KW-0456">Lyase</keyword>
<keyword id="KW-0479">Metal-binding</keyword>
<keyword id="KW-0627">Porphyrin biosynthesis</keyword>
<proteinExistence type="inferred from homology"/>
<evidence type="ECO:0000250" key="1"/>
<evidence type="ECO:0000305" key="2"/>
<organism>
    <name type="scientific">Priestia megaterium</name>
    <name type="common">Bacillus megaterium</name>
    <dbReference type="NCBI Taxonomy" id="1404"/>
    <lineage>
        <taxon>Bacteria</taxon>
        <taxon>Bacillati</taxon>
        <taxon>Bacillota</taxon>
        <taxon>Bacilli</taxon>
        <taxon>Bacillales</taxon>
        <taxon>Bacillaceae</taxon>
        <taxon>Priestia</taxon>
    </lineage>
</organism>
<sequence>MHKKLTKEVDYMDAVLYVCHGSRVKEGADQAVAFIERCKKNLDVPIQEVCFLELASPTIEQGFEACIEQGATRIAIVPLLLLTAAHAKHDIPEEIQKVYERYPQVEVLYGEPFGVDERIVDILVERINETNVDKHEDSMVLLVGRGSSDPAVKRDLNEIAQLLKGKGAFKEVSTCYLAAASPNLKEGLHLAKRTSYKQVFVLPYLLFTGILMNEIKEELEQLSTDAQQFILANYLGYHDGLAHILSHQVKTLLSSKGNQYDVYRYA</sequence>
<accession>P61817</accession>
<dbReference type="EC" id="4.99.1.4"/>
<dbReference type="EMBL" id="AJ509159">
    <property type="protein sequence ID" value="CAD48922.1"/>
    <property type="molecule type" value="Genomic_DNA"/>
</dbReference>
<dbReference type="SMR" id="P61817"/>
<dbReference type="BioCyc" id="MetaCyc:MONOMER-18854"/>
<dbReference type="UniPathway" id="UPA00262">
    <property type="reaction ID" value="UER00376"/>
</dbReference>
<dbReference type="GO" id="GO:0046872">
    <property type="term" value="F:metal ion binding"/>
    <property type="evidence" value="ECO:0007669"/>
    <property type="project" value="UniProtKB-KW"/>
</dbReference>
<dbReference type="GO" id="GO:0051266">
    <property type="term" value="F:sirohydrochlorin ferrochelatase activity"/>
    <property type="evidence" value="ECO:0007669"/>
    <property type="project" value="UniProtKB-EC"/>
</dbReference>
<dbReference type="GO" id="GO:0019354">
    <property type="term" value="P:siroheme biosynthetic process"/>
    <property type="evidence" value="ECO:0007669"/>
    <property type="project" value="UniProtKB-UniPathway"/>
</dbReference>
<dbReference type="CDD" id="cd03414">
    <property type="entry name" value="CbiX_SirB_C"/>
    <property type="match status" value="1"/>
</dbReference>
<dbReference type="CDD" id="cd03416">
    <property type="entry name" value="CbiX_SirB_N"/>
    <property type="match status" value="1"/>
</dbReference>
<dbReference type="Gene3D" id="3.40.50.1400">
    <property type="match status" value="2"/>
</dbReference>
<dbReference type="InterPro" id="IPR002762">
    <property type="entry name" value="CbiX-like"/>
</dbReference>
<dbReference type="InterPro" id="IPR050963">
    <property type="entry name" value="Sirohydro_Cobaltochel/CbiX"/>
</dbReference>
<dbReference type="PANTHER" id="PTHR33542">
    <property type="entry name" value="SIROHYDROCHLORIN FERROCHELATASE, CHLOROPLASTIC"/>
    <property type="match status" value="1"/>
</dbReference>
<dbReference type="PANTHER" id="PTHR33542:SF3">
    <property type="entry name" value="SIROHYDROCHLORIN FERROCHELATASE, CHLOROPLASTIC"/>
    <property type="match status" value="1"/>
</dbReference>
<dbReference type="Pfam" id="PF01903">
    <property type="entry name" value="CbiX"/>
    <property type="match status" value="2"/>
</dbReference>
<dbReference type="SUPFAM" id="SSF53800">
    <property type="entry name" value="Chelatase"/>
    <property type="match status" value="1"/>
</dbReference>